<organism>
    <name type="scientific">Streptococcus pyogenes serotype M4 (strain MGAS10750)</name>
    <dbReference type="NCBI Taxonomy" id="370554"/>
    <lineage>
        <taxon>Bacteria</taxon>
        <taxon>Bacillati</taxon>
        <taxon>Bacillota</taxon>
        <taxon>Bacilli</taxon>
        <taxon>Lactobacillales</taxon>
        <taxon>Streptococcaceae</taxon>
        <taxon>Streptococcus</taxon>
    </lineage>
</organism>
<gene>
    <name evidence="1" type="primary">rplF</name>
    <name type="ordered locus">MGAS10750_Spy0063</name>
</gene>
<evidence type="ECO:0000255" key="1">
    <source>
        <dbReference type="HAMAP-Rule" id="MF_01365"/>
    </source>
</evidence>
<evidence type="ECO:0000305" key="2"/>
<comment type="function">
    <text evidence="1">This protein binds to the 23S rRNA, and is important in its secondary structure. It is located near the subunit interface in the base of the L7/L12 stalk, and near the tRNA binding site of the peptidyltransferase center.</text>
</comment>
<comment type="subunit">
    <text evidence="1">Part of the 50S ribosomal subunit.</text>
</comment>
<comment type="similarity">
    <text evidence="1">Belongs to the universal ribosomal protein uL6 family.</text>
</comment>
<keyword id="KW-0687">Ribonucleoprotein</keyword>
<keyword id="KW-0689">Ribosomal protein</keyword>
<keyword id="KW-0694">RNA-binding</keyword>
<keyword id="KW-0699">rRNA-binding</keyword>
<dbReference type="EMBL" id="CP000262">
    <property type="protein sequence ID" value="ABF37013.1"/>
    <property type="molecule type" value="Genomic_DNA"/>
</dbReference>
<dbReference type="SMR" id="Q1J8Z8"/>
<dbReference type="KEGG" id="spi:MGAS10750_Spy0063"/>
<dbReference type="HOGENOM" id="CLU_065464_1_2_9"/>
<dbReference type="Proteomes" id="UP000002434">
    <property type="component" value="Chromosome"/>
</dbReference>
<dbReference type="GO" id="GO:0022625">
    <property type="term" value="C:cytosolic large ribosomal subunit"/>
    <property type="evidence" value="ECO:0007669"/>
    <property type="project" value="TreeGrafter"/>
</dbReference>
<dbReference type="GO" id="GO:0019843">
    <property type="term" value="F:rRNA binding"/>
    <property type="evidence" value="ECO:0007669"/>
    <property type="project" value="UniProtKB-UniRule"/>
</dbReference>
<dbReference type="GO" id="GO:0003735">
    <property type="term" value="F:structural constituent of ribosome"/>
    <property type="evidence" value="ECO:0007669"/>
    <property type="project" value="InterPro"/>
</dbReference>
<dbReference type="GO" id="GO:0002181">
    <property type="term" value="P:cytoplasmic translation"/>
    <property type="evidence" value="ECO:0007669"/>
    <property type="project" value="TreeGrafter"/>
</dbReference>
<dbReference type="FunFam" id="3.90.930.12:FF:000001">
    <property type="entry name" value="50S ribosomal protein L6"/>
    <property type="match status" value="1"/>
</dbReference>
<dbReference type="FunFam" id="3.90.930.12:FF:000002">
    <property type="entry name" value="50S ribosomal protein L6"/>
    <property type="match status" value="1"/>
</dbReference>
<dbReference type="Gene3D" id="3.90.930.12">
    <property type="entry name" value="Ribosomal protein L6, alpha-beta domain"/>
    <property type="match status" value="2"/>
</dbReference>
<dbReference type="HAMAP" id="MF_01365_B">
    <property type="entry name" value="Ribosomal_uL6_B"/>
    <property type="match status" value="1"/>
</dbReference>
<dbReference type="InterPro" id="IPR000702">
    <property type="entry name" value="Ribosomal_uL6-like"/>
</dbReference>
<dbReference type="InterPro" id="IPR036789">
    <property type="entry name" value="Ribosomal_uL6-like_a/b-dom_sf"/>
</dbReference>
<dbReference type="InterPro" id="IPR020040">
    <property type="entry name" value="Ribosomal_uL6_a/b-dom"/>
</dbReference>
<dbReference type="InterPro" id="IPR019906">
    <property type="entry name" value="Ribosomal_uL6_bac-type"/>
</dbReference>
<dbReference type="InterPro" id="IPR002358">
    <property type="entry name" value="Ribosomal_uL6_CS"/>
</dbReference>
<dbReference type="NCBIfam" id="TIGR03654">
    <property type="entry name" value="L6_bact"/>
    <property type="match status" value="1"/>
</dbReference>
<dbReference type="PANTHER" id="PTHR11655">
    <property type="entry name" value="60S/50S RIBOSOMAL PROTEIN L6/L9"/>
    <property type="match status" value="1"/>
</dbReference>
<dbReference type="PANTHER" id="PTHR11655:SF14">
    <property type="entry name" value="LARGE RIBOSOMAL SUBUNIT PROTEIN UL6M"/>
    <property type="match status" value="1"/>
</dbReference>
<dbReference type="Pfam" id="PF00347">
    <property type="entry name" value="Ribosomal_L6"/>
    <property type="match status" value="2"/>
</dbReference>
<dbReference type="PIRSF" id="PIRSF002162">
    <property type="entry name" value="Ribosomal_L6"/>
    <property type="match status" value="1"/>
</dbReference>
<dbReference type="PRINTS" id="PR00059">
    <property type="entry name" value="RIBOSOMALL6"/>
</dbReference>
<dbReference type="SUPFAM" id="SSF56053">
    <property type="entry name" value="Ribosomal protein L6"/>
    <property type="match status" value="2"/>
</dbReference>
<dbReference type="PROSITE" id="PS00525">
    <property type="entry name" value="RIBOSOMAL_L6_1"/>
    <property type="match status" value="1"/>
</dbReference>
<accession>Q1J8Z8</accession>
<sequence>MSRIGNKVITMPAGVELTNNNNVITVKGPKGELTREFNKNIEIKVEGTEITVVRPNDSKEMKTIHGTTRANLNNMVVGVSEGFKKDLEMKGVGYRAQLQGTKLVLSVGKSHQDEVEAPEGITFTVANPTSISVEGINKEVVGQTAAYIRSLRSPEPYKGKGIRYVGEYVRLKEGKTGK</sequence>
<name>RL6_STRPF</name>
<protein>
    <recommendedName>
        <fullName evidence="1">Large ribosomal subunit protein uL6</fullName>
    </recommendedName>
    <alternativeName>
        <fullName evidence="2">50S ribosomal protein L6</fullName>
    </alternativeName>
</protein>
<feature type="chain" id="PRO_0000260953" description="Large ribosomal subunit protein uL6">
    <location>
        <begin position="1"/>
        <end position="178"/>
    </location>
</feature>
<proteinExistence type="inferred from homology"/>
<reference key="1">
    <citation type="journal article" date="2006" name="Proc. Natl. Acad. Sci. U.S.A.">
        <title>Molecular genetic anatomy of inter- and intraserotype variation in the human bacterial pathogen group A Streptococcus.</title>
        <authorList>
            <person name="Beres S.B."/>
            <person name="Richter E.W."/>
            <person name="Nagiec M.J."/>
            <person name="Sumby P."/>
            <person name="Porcella S.F."/>
            <person name="DeLeo F.R."/>
            <person name="Musser J.M."/>
        </authorList>
    </citation>
    <scope>NUCLEOTIDE SEQUENCE [LARGE SCALE GENOMIC DNA]</scope>
    <source>
        <strain>MGAS10750</strain>
    </source>
</reference>